<accession>Q01896</accession>
<accession>D6VS27</accession>
<evidence type="ECO:0000250" key="1">
    <source>
        <dbReference type="UniProtKB" id="P04191"/>
    </source>
</evidence>
<evidence type="ECO:0000250" key="2">
    <source>
        <dbReference type="UniProtKB" id="P13587"/>
    </source>
</evidence>
<evidence type="ECO:0000255" key="3"/>
<evidence type="ECO:0000256" key="4">
    <source>
        <dbReference type="SAM" id="MobiDB-lite"/>
    </source>
</evidence>
<evidence type="ECO:0000269" key="5">
    <source>
    </source>
</evidence>
<evidence type="ECO:0000269" key="6">
    <source>
    </source>
</evidence>
<evidence type="ECO:0000269" key="7">
    <source>
    </source>
</evidence>
<evidence type="ECO:0000269" key="8">
    <source>
    </source>
</evidence>
<evidence type="ECO:0000269" key="9">
    <source>
    </source>
</evidence>
<evidence type="ECO:0000305" key="10"/>
<evidence type="ECO:0000305" key="11">
    <source>
    </source>
</evidence>
<evidence type="ECO:0000305" key="12">
    <source>
    </source>
</evidence>
<evidence type="ECO:0000312" key="13">
    <source>
        <dbReference type="SGD" id="S000002446"/>
    </source>
</evidence>
<reference key="1">
    <citation type="journal article" date="1993" name="Mol. Gen. Genet.">
        <title>Differential expression of two genes encoding isoforms of the ATPase involved in sodium efflux in Saccharomyces cerevisiae.</title>
        <authorList>
            <person name="Garciadeblas B."/>
            <person name="Rubio F."/>
            <person name="Quintero F.J."/>
            <person name="Banuelos M.A."/>
            <person name="Haro R."/>
            <person name="Rodriguez-Navarro A."/>
        </authorList>
    </citation>
    <scope>NUCLEOTIDE SEQUENCE [GENOMIC DNA]</scope>
    <scope>FUNCTION</scope>
    <source>
        <strain>ATCC 204660 / DBY746</strain>
    </source>
</reference>
<reference key="2">
    <citation type="journal article" date="1995" name="EMBO J.">
        <title>The PMR2 gene cluster encodes functionally distinct isoforms of a putative Na+ pump in the yeast plasma membrane.</title>
        <authorList>
            <person name="Wieland J."/>
            <person name="Nitsche A.M."/>
            <person name="Strayle J."/>
            <person name="Steiner H."/>
            <person name="Rudolph H.K."/>
        </authorList>
    </citation>
    <scope>NUCLEOTIDE SEQUENCE [GENOMIC DNA]</scope>
    <scope>FUNCTION</scope>
    <scope>CATALYTIC ACTIVITY</scope>
    <scope>SUBCELLULAR LOCATION</scope>
    <source>
        <strain>ATCC 204508 / S288c</strain>
    </source>
</reference>
<reference key="3">
    <citation type="journal article" date="1997" name="Nature">
        <title>The nucleotide sequence of Saccharomyces cerevisiae chromosome IV.</title>
        <authorList>
            <person name="Jacq C."/>
            <person name="Alt-Moerbe J."/>
            <person name="Andre B."/>
            <person name="Arnold W."/>
            <person name="Bahr A."/>
            <person name="Ballesta J.P.G."/>
            <person name="Bargues M."/>
            <person name="Baron L."/>
            <person name="Becker A."/>
            <person name="Biteau N."/>
            <person name="Bloecker H."/>
            <person name="Blugeon C."/>
            <person name="Boskovic J."/>
            <person name="Brandt P."/>
            <person name="Brueckner M."/>
            <person name="Buitrago M.J."/>
            <person name="Coster F."/>
            <person name="Delaveau T."/>
            <person name="del Rey F."/>
            <person name="Dujon B."/>
            <person name="Eide L.G."/>
            <person name="Garcia-Cantalejo J.M."/>
            <person name="Goffeau A."/>
            <person name="Gomez-Peris A."/>
            <person name="Granotier C."/>
            <person name="Hanemann V."/>
            <person name="Hankeln T."/>
            <person name="Hoheisel J.D."/>
            <person name="Jaeger W."/>
            <person name="Jimenez A."/>
            <person name="Jonniaux J.-L."/>
            <person name="Kraemer C."/>
            <person name="Kuester H."/>
            <person name="Laamanen P."/>
            <person name="Legros Y."/>
            <person name="Louis E.J."/>
            <person name="Moeller-Rieker S."/>
            <person name="Monnet A."/>
            <person name="Moro M."/>
            <person name="Mueller-Auer S."/>
            <person name="Nussbaumer B."/>
            <person name="Paricio N."/>
            <person name="Paulin L."/>
            <person name="Perea J."/>
            <person name="Perez-Alonso M."/>
            <person name="Perez-Ortin J.E."/>
            <person name="Pohl T.M."/>
            <person name="Prydz H."/>
            <person name="Purnelle B."/>
            <person name="Rasmussen S.W."/>
            <person name="Remacha M.A."/>
            <person name="Revuelta J.L."/>
            <person name="Rieger M."/>
            <person name="Salom D."/>
            <person name="Saluz H.P."/>
            <person name="Saiz J.E."/>
            <person name="Saren A.-M."/>
            <person name="Schaefer M."/>
            <person name="Scharfe M."/>
            <person name="Schmidt E.R."/>
            <person name="Schneider C."/>
            <person name="Scholler P."/>
            <person name="Schwarz S."/>
            <person name="Soler-Mira A."/>
            <person name="Urrestarazu L.A."/>
            <person name="Verhasselt P."/>
            <person name="Vissers S."/>
            <person name="Voet M."/>
            <person name="Volckaert G."/>
            <person name="Wagner G."/>
            <person name="Wambutt R."/>
            <person name="Wedler E."/>
            <person name="Wedler H."/>
            <person name="Woelfl S."/>
            <person name="Harris D.E."/>
            <person name="Bowman S."/>
            <person name="Brown D."/>
            <person name="Churcher C.M."/>
            <person name="Connor R."/>
            <person name="Dedman K."/>
            <person name="Gentles S."/>
            <person name="Hamlin N."/>
            <person name="Hunt S."/>
            <person name="Jones L."/>
            <person name="McDonald S."/>
            <person name="Murphy L.D."/>
            <person name="Niblett D."/>
            <person name="Odell C."/>
            <person name="Oliver K."/>
            <person name="Rajandream M.A."/>
            <person name="Richards C."/>
            <person name="Shore L."/>
            <person name="Walsh S.V."/>
            <person name="Barrell B.G."/>
            <person name="Dietrich F.S."/>
            <person name="Mulligan J.T."/>
            <person name="Allen E."/>
            <person name="Araujo R."/>
            <person name="Aviles E."/>
            <person name="Berno A."/>
            <person name="Carpenter J."/>
            <person name="Chen E."/>
            <person name="Cherry J.M."/>
            <person name="Chung E."/>
            <person name="Duncan M."/>
            <person name="Hunicke-Smith S."/>
            <person name="Hyman R.W."/>
            <person name="Komp C."/>
            <person name="Lashkari D."/>
            <person name="Lew H."/>
            <person name="Lin D."/>
            <person name="Mosedale D."/>
            <person name="Nakahara K."/>
            <person name="Namath A."/>
            <person name="Oefner P."/>
            <person name="Oh C."/>
            <person name="Petel F.X."/>
            <person name="Roberts D."/>
            <person name="Schramm S."/>
            <person name="Schroeder M."/>
            <person name="Shogren T."/>
            <person name="Shroff N."/>
            <person name="Winant A."/>
            <person name="Yelton M.A."/>
            <person name="Botstein D."/>
            <person name="Davis R.W."/>
            <person name="Johnston M."/>
            <person name="Andrews S."/>
            <person name="Brinkman R."/>
            <person name="Cooper J."/>
            <person name="Ding H."/>
            <person name="Du Z."/>
            <person name="Favello A."/>
            <person name="Fulton L."/>
            <person name="Gattung S."/>
            <person name="Greco T."/>
            <person name="Hallsworth K."/>
            <person name="Hawkins J."/>
            <person name="Hillier L.W."/>
            <person name="Jier M."/>
            <person name="Johnson D."/>
            <person name="Johnston L."/>
            <person name="Kirsten J."/>
            <person name="Kucaba T."/>
            <person name="Langston Y."/>
            <person name="Latreille P."/>
            <person name="Le T."/>
            <person name="Mardis E."/>
            <person name="Menezes S."/>
            <person name="Miller N."/>
            <person name="Nhan M."/>
            <person name="Pauley A."/>
            <person name="Peluso D."/>
            <person name="Rifkin L."/>
            <person name="Riles L."/>
            <person name="Taich A."/>
            <person name="Trevaskis E."/>
            <person name="Vignati D."/>
            <person name="Wilcox L."/>
            <person name="Wohldman P."/>
            <person name="Vaudin M."/>
            <person name="Wilson R."/>
            <person name="Waterston R."/>
            <person name="Albermann K."/>
            <person name="Hani J."/>
            <person name="Heumann K."/>
            <person name="Kleine K."/>
            <person name="Mewes H.-W."/>
            <person name="Zollner A."/>
            <person name="Zaccaria P."/>
        </authorList>
    </citation>
    <scope>NUCLEOTIDE SEQUENCE [LARGE SCALE GENOMIC DNA]</scope>
    <source>
        <strain>ATCC 204508 / S288c</strain>
    </source>
</reference>
<reference key="4">
    <citation type="journal article" date="2014" name="G3 (Bethesda)">
        <title>The reference genome sequence of Saccharomyces cerevisiae: Then and now.</title>
        <authorList>
            <person name="Engel S.R."/>
            <person name="Dietrich F.S."/>
            <person name="Fisk D.G."/>
            <person name="Binkley G."/>
            <person name="Balakrishnan R."/>
            <person name="Costanzo M.C."/>
            <person name="Dwight S.S."/>
            <person name="Hitz B.C."/>
            <person name="Karra K."/>
            <person name="Nash R.S."/>
            <person name="Weng S."/>
            <person name="Wong E.D."/>
            <person name="Lloyd P."/>
            <person name="Skrzypek M.S."/>
            <person name="Miyasato S.R."/>
            <person name="Simison M."/>
            <person name="Cherry J.M."/>
        </authorList>
    </citation>
    <scope>GENOME REANNOTATION</scope>
    <source>
        <strain>ATCC 204508 / S288c</strain>
    </source>
</reference>
<reference key="5">
    <citation type="journal article" date="2003" name="Nature">
        <title>Global analysis of protein localization in budding yeast.</title>
        <authorList>
            <person name="Huh W.-K."/>
            <person name="Falvo J.V."/>
            <person name="Gerke L.C."/>
            <person name="Carroll A.S."/>
            <person name="Howson R.W."/>
            <person name="Weissman J.S."/>
            <person name="O'Shea E.K."/>
        </authorList>
    </citation>
    <scope>SUBCELLULAR LOCATION [LARGE SCALE ANALYSIS]</scope>
</reference>
<reference key="6">
    <citation type="journal article" date="2003" name="Nature">
        <title>Global analysis of protein expression in yeast.</title>
        <authorList>
            <person name="Ghaemmaghami S."/>
            <person name="Huh W.-K."/>
            <person name="Bower K."/>
            <person name="Howson R.W."/>
            <person name="Belle A."/>
            <person name="Dephoure N."/>
            <person name="O'Shea E.K."/>
            <person name="Weissman J.S."/>
        </authorList>
    </citation>
    <scope>LEVEL OF PROTEIN EXPRESSION [LARGE SCALE ANALYSIS]</scope>
</reference>
<reference key="7">
    <citation type="journal article" date="2006" name="Proc. Natl. Acad. Sci. U.S.A.">
        <title>A global topology map of the Saccharomyces cerevisiae membrane proteome.</title>
        <authorList>
            <person name="Kim H."/>
            <person name="Melen K."/>
            <person name="Oesterberg M."/>
            <person name="von Heijne G."/>
        </authorList>
    </citation>
    <scope>TOPOLOGY [LARGE SCALE ANALYSIS]</scope>
    <source>
        <strain>ATCC 208353 / W303-1A</strain>
    </source>
</reference>
<reference key="8">
    <citation type="journal article" date="2012" name="FEMS Yeast Res.">
        <title>Plasma-membrane hyperpolarization diminishes the cation efflux via Nha1 antiporter and Ena ATPase under potassium-limiting conditions.</title>
        <authorList>
            <person name="Zahradka J."/>
            <person name="Sychrova H."/>
        </authorList>
    </citation>
    <scope>FUNCTION</scope>
    <scope>CATALYTIC ACTIVITY</scope>
</reference>
<dbReference type="EC" id="7.2.2.3" evidence="12"/>
<dbReference type="EMBL" id="X67136">
    <property type="protein sequence ID" value="CAA47615.1"/>
    <property type="molecule type" value="Genomic_DNA"/>
</dbReference>
<dbReference type="EMBL" id="U24069">
    <property type="protein sequence ID" value="AAA65601.1"/>
    <property type="molecule type" value="Genomic_DNA"/>
</dbReference>
<dbReference type="EMBL" id="Z74335">
    <property type="protein sequence ID" value="CAA98866.1"/>
    <property type="molecule type" value="Genomic_DNA"/>
</dbReference>
<dbReference type="EMBL" id="Z54075">
    <property type="protein sequence ID" value="CAA90778.1"/>
    <property type="molecule type" value="Genomic_DNA"/>
</dbReference>
<dbReference type="EMBL" id="BK006938">
    <property type="protein sequence ID" value="DAA11887.1"/>
    <property type="molecule type" value="Genomic_DNA"/>
</dbReference>
<dbReference type="PIR" id="S25007">
    <property type="entry name" value="S25007"/>
</dbReference>
<dbReference type="RefSeq" id="NP_010324.3">
    <property type="nucleotide sequence ID" value="NM_001180347.3"/>
</dbReference>
<dbReference type="SMR" id="Q01896"/>
<dbReference type="BioGRID" id="32094">
    <property type="interactions" value="30"/>
</dbReference>
<dbReference type="DIP" id="DIP-7915N"/>
<dbReference type="FunCoup" id="Q01896">
    <property type="interactions" value="65"/>
</dbReference>
<dbReference type="IntAct" id="Q01896">
    <property type="interactions" value="5"/>
</dbReference>
<dbReference type="MINT" id="Q01896"/>
<dbReference type="STRING" id="4932.YDR039C"/>
<dbReference type="iPTMnet" id="Q01896"/>
<dbReference type="PaxDb" id="4932-YDR039C"/>
<dbReference type="PeptideAtlas" id="Q01896"/>
<dbReference type="EnsemblFungi" id="YDR039C_mRNA">
    <property type="protein sequence ID" value="YDR039C"/>
    <property type="gene ID" value="YDR039C"/>
</dbReference>
<dbReference type="GeneID" id="851609"/>
<dbReference type="KEGG" id="sce:YDR039C"/>
<dbReference type="AGR" id="SGD:S000002446"/>
<dbReference type="SGD" id="S000002446">
    <property type="gene designation" value="ENA2"/>
</dbReference>
<dbReference type="VEuPathDB" id="FungiDB:YDR039C"/>
<dbReference type="eggNOG" id="KOG0202">
    <property type="taxonomic scope" value="Eukaryota"/>
</dbReference>
<dbReference type="GeneTree" id="ENSGT00940000176395"/>
<dbReference type="HOGENOM" id="CLU_002360_4_1_1"/>
<dbReference type="InParanoid" id="Q01896"/>
<dbReference type="OMA" id="NGQEYSM"/>
<dbReference type="OrthoDB" id="3352408at2759"/>
<dbReference type="BioCyc" id="YEAST:G3O-29653-MONOMER"/>
<dbReference type="PRO" id="PR:Q01896"/>
<dbReference type="Proteomes" id="UP000002311">
    <property type="component" value="Chromosome IV"/>
</dbReference>
<dbReference type="RNAct" id="Q01896">
    <property type="molecule type" value="protein"/>
</dbReference>
<dbReference type="GO" id="GO:0005739">
    <property type="term" value="C:mitochondrion"/>
    <property type="evidence" value="ECO:0007005"/>
    <property type="project" value="SGD"/>
</dbReference>
<dbReference type="GO" id="GO:0005886">
    <property type="term" value="C:plasma membrane"/>
    <property type="evidence" value="ECO:0000314"/>
    <property type="project" value="SGD"/>
</dbReference>
<dbReference type="GO" id="GO:0005524">
    <property type="term" value="F:ATP binding"/>
    <property type="evidence" value="ECO:0007669"/>
    <property type="project" value="UniProtKB-KW"/>
</dbReference>
<dbReference type="GO" id="GO:0016887">
    <property type="term" value="F:ATP hydrolysis activity"/>
    <property type="evidence" value="ECO:0007669"/>
    <property type="project" value="InterPro"/>
</dbReference>
<dbReference type="GO" id="GO:0046872">
    <property type="term" value="F:metal ion binding"/>
    <property type="evidence" value="ECO:0007669"/>
    <property type="project" value="UniProtKB-KW"/>
</dbReference>
<dbReference type="GO" id="GO:0015662">
    <property type="term" value="F:P-type ion transporter activity"/>
    <property type="evidence" value="ECO:0000316"/>
    <property type="project" value="SGD"/>
</dbReference>
<dbReference type="GO" id="GO:0008556">
    <property type="term" value="F:P-type potassium transmembrane transporter activity"/>
    <property type="evidence" value="ECO:0000315"/>
    <property type="project" value="SGD"/>
</dbReference>
<dbReference type="GO" id="GO:0008554">
    <property type="term" value="F:P-type sodium transporter activity"/>
    <property type="evidence" value="ECO:0000316"/>
    <property type="project" value="SGD"/>
</dbReference>
<dbReference type="GO" id="GO:0006874">
    <property type="term" value="P:intracellular calcium ion homeostasis"/>
    <property type="evidence" value="ECO:0000318"/>
    <property type="project" value="GO_Central"/>
</dbReference>
<dbReference type="GO" id="GO:0034220">
    <property type="term" value="P:monoatomic ion transmembrane transport"/>
    <property type="evidence" value="ECO:0000318"/>
    <property type="project" value="GO_Central"/>
</dbReference>
<dbReference type="GO" id="GO:0006813">
    <property type="term" value="P:potassium ion transport"/>
    <property type="evidence" value="ECO:0000315"/>
    <property type="project" value="SGD"/>
</dbReference>
<dbReference type="GO" id="GO:0006814">
    <property type="term" value="P:sodium ion transport"/>
    <property type="evidence" value="ECO:0000316"/>
    <property type="project" value="SGD"/>
</dbReference>
<dbReference type="GO" id="GO:0055085">
    <property type="term" value="P:transmembrane transport"/>
    <property type="evidence" value="ECO:0000315"/>
    <property type="project" value="SGD"/>
</dbReference>
<dbReference type="CDD" id="cd02086">
    <property type="entry name" value="P-type_ATPase_Na_ENA"/>
    <property type="match status" value="1"/>
</dbReference>
<dbReference type="FunFam" id="2.70.150.10:FF:000016">
    <property type="entry name" value="Calcium-transporting P-type ATPase putative"/>
    <property type="match status" value="1"/>
</dbReference>
<dbReference type="FunFam" id="1.20.1110.10:FF:000040">
    <property type="entry name" value="Na(+)-exporting P-type ATPase"/>
    <property type="match status" value="1"/>
</dbReference>
<dbReference type="FunFam" id="1.20.1110.10:FF:000015">
    <property type="entry name" value="Sodium ion P-type ATPase"/>
    <property type="match status" value="1"/>
</dbReference>
<dbReference type="FunFam" id="3.40.1110.10:FF:000039">
    <property type="entry name" value="Sodium P-type ATPase"/>
    <property type="match status" value="1"/>
</dbReference>
<dbReference type="FunFam" id="3.40.50.1000:FF:000047">
    <property type="entry name" value="Sodium P-type ATPase"/>
    <property type="match status" value="1"/>
</dbReference>
<dbReference type="Gene3D" id="3.40.1110.10">
    <property type="entry name" value="Calcium-transporting ATPase, cytoplasmic domain N"/>
    <property type="match status" value="1"/>
</dbReference>
<dbReference type="Gene3D" id="2.70.150.10">
    <property type="entry name" value="Calcium-transporting ATPase, cytoplasmic transduction domain A"/>
    <property type="match status" value="1"/>
</dbReference>
<dbReference type="Gene3D" id="1.20.1110.10">
    <property type="entry name" value="Calcium-transporting ATPase, transmembrane domain"/>
    <property type="match status" value="2"/>
</dbReference>
<dbReference type="Gene3D" id="3.40.50.1000">
    <property type="entry name" value="HAD superfamily/HAD-like"/>
    <property type="match status" value="1"/>
</dbReference>
<dbReference type="InterPro" id="IPR006068">
    <property type="entry name" value="ATPase_P-typ_cation-transptr_C"/>
</dbReference>
<dbReference type="InterPro" id="IPR004014">
    <property type="entry name" value="ATPase_P-typ_cation-transptr_N"/>
</dbReference>
<dbReference type="InterPro" id="IPR023299">
    <property type="entry name" value="ATPase_P-typ_cyto_dom_N"/>
</dbReference>
<dbReference type="InterPro" id="IPR018303">
    <property type="entry name" value="ATPase_P-typ_P_site"/>
</dbReference>
<dbReference type="InterPro" id="IPR023298">
    <property type="entry name" value="ATPase_P-typ_TM_dom_sf"/>
</dbReference>
<dbReference type="InterPro" id="IPR008250">
    <property type="entry name" value="ATPase_P-typ_transduc_dom_A_sf"/>
</dbReference>
<dbReference type="InterPro" id="IPR036412">
    <property type="entry name" value="HAD-like_sf"/>
</dbReference>
<dbReference type="InterPro" id="IPR023214">
    <property type="entry name" value="HAD_sf"/>
</dbReference>
<dbReference type="InterPro" id="IPR006414">
    <property type="entry name" value="P-type_ATPase_IID"/>
</dbReference>
<dbReference type="InterPro" id="IPR001757">
    <property type="entry name" value="P_typ_ATPase"/>
</dbReference>
<dbReference type="InterPro" id="IPR044492">
    <property type="entry name" value="P_typ_ATPase_HD_dom"/>
</dbReference>
<dbReference type="NCBIfam" id="TIGR01523">
    <property type="entry name" value="ATPase-IID_K-Na"/>
    <property type="match status" value="1"/>
</dbReference>
<dbReference type="NCBIfam" id="TIGR01494">
    <property type="entry name" value="ATPase_P-type"/>
    <property type="match status" value="3"/>
</dbReference>
<dbReference type="PANTHER" id="PTHR42861">
    <property type="entry name" value="CALCIUM-TRANSPORTING ATPASE"/>
    <property type="match status" value="1"/>
</dbReference>
<dbReference type="Pfam" id="PF13246">
    <property type="entry name" value="Cation_ATPase"/>
    <property type="match status" value="1"/>
</dbReference>
<dbReference type="Pfam" id="PF00689">
    <property type="entry name" value="Cation_ATPase_C"/>
    <property type="match status" value="1"/>
</dbReference>
<dbReference type="Pfam" id="PF00690">
    <property type="entry name" value="Cation_ATPase_N"/>
    <property type="match status" value="1"/>
</dbReference>
<dbReference type="Pfam" id="PF00122">
    <property type="entry name" value="E1-E2_ATPase"/>
    <property type="match status" value="1"/>
</dbReference>
<dbReference type="Pfam" id="PF00702">
    <property type="entry name" value="Hydrolase"/>
    <property type="match status" value="1"/>
</dbReference>
<dbReference type="PRINTS" id="PR00119">
    <property type="entry name" value="CATATPASE"/>
</dbReference>
<dbReference type="SFLD" id="SFLDS00003">
    <property type="entry name" value="Haloacid_Dehalogenase"/>
    <property type="match status" value="1"/>
</dbReference>
<dbReference type="SFLD" id="SFLDF00027">
    <property type="entry name" value="p-type_atpase"/>
    <property type="match status" value="1"/>
</dbReference>
<dbReference type="SMART" id="SM00831">
    <property type="entry name" value="Cation_ATPase_N"/>
    <property type="match status" value="1"/>
</dbReference>
<dbReference type="SUPFAM" id="SSF81653">
    <property type="entry name" value="Calcium ATPase, transduction domain A"/>
    <property type="match status" value="1"/>
</dbReference>
<dbReference type="SUPFAM" id="SSF81665">
    <property type="entry name" value="Calcium ATPase, transmembrane domain M"/>
    <property type="match status" value="1"/>
</dbReference>
<dbReference type="SUPFAM" id="SSF56784">
    <property type="entry name" value="HAD-like"/>
    <property type="match status" value="1"/>
</dbReference>
<dbReference type="SUPFAM" id="SSF81660">
    <property type="entry name" value="Metal cation-transporting ATPase, ATP-binding domain N"/>
    <property type="match status" value="1"/>
</dbReference>
<dbReference type="PROSITE" id="PS00154">
    <property type="entry name" value="ATPASE_E1_E2"/>
    <property type="match status" value="1"/>
</dbReference>
<sequence>MSEGTVKENNNEEFNAYHTLTTEEAAEFIGTSLTEGLTQDESLRRLKAVGENTLGDDTKIDYKAMVLHQVCNAMIMVLVISMAISFAVRDWITGGVISFVIAVNVLIGLVQEYKATKTMNSLKNLSSPNAHVIRNGKSETINSKDVVPGDICLVKVGDTIPADLRLIETKNFDTDESLLTGESLPVSKDANLVFGKEEETSVGDRLNLAFSSSAVVKGRAKGIVIKTALNSEIGKIAKSLQGDSGLISRDPSKSWLQNTWISTKKVTGAFLGTNVGTPLHRKLSKLAVLLFWIAVLFAIIVMASQKFDVDKRVAIYAICVALSMIPSSLVVVLTITMSVGAAVMVSRNVIVRKLDSLEALGAVNDICSDKTGTLTQGKMLARQIWIPRFGTITISNSDDPFNPNEGNVSLIPRFSPYEYSHNEDGDVGILQNFKDRLYEKDLPEDIDMDLFQKWLETATLANIATVFKDDATDCWKAHGDPTEIAIQVFATKMDLPHNALTGEKSTNQSNENDQSSLSQHNEKPGSAQFEHIAEFPFDSTVKRMSSVYYNNHNETYNIYGKGAFESIISCCSSWYGKDGVKITPLTDCDVETIRKNVYSLSNEGLRVLGFASKSFTKDQVNDDQLKNITSNRATAESDLVFLGLIGIYDPPRNETAGAVKKFHQAGINVHMLTGDFVGTAKAIAQEVGILPTNLYHYSQEIVDSMVMTGSQFDGLSEEEVDDLPVLPLVIARCSPQTKVRMIEALHRRKKFCAMTGDGVNDSPSLKMANVGIAMGINGSDVSKEASDIVLSDDNFASILNAVEEGRRMTDNIQKFVLQLLAENVAQALYLIIGLVFRDENGKSVFPLSPVEVLWIIVVTSCFPAMGLGLEKAAPDLMDRPPHDSEVGIFTWEVIIDTFAYGIIMTGSCMASFTGSLYGINSGRLGHDCDGTYNSSCRDVYRSRSAAFATMTWCALILAWEVVDMRRSFFRMHPDTDSPVKEFFRSIWGNQFLFWSIIFGFVSAFPVVYIPVINDKVFLHKPIGAEWGLAIAFTIAFWIGAELYKCGKRRYFKTQRAHNPENDLESNNKRDPFEAYSTSTTIHTEVNIGIKQ</sequence>
<comment type="function">
    <text evidence="7 8 9">Catalyzes the hydrolysis of ATP coupled with the export of sodium and potassium from the cell (PubMed:7664728, PubMed:8437581). May export potassium less efficiently (PubMed:22329368). May transport other cations such as lithium (PubMed:7664728, PubMed:8437581). Sodium/potassium efflux ATPases are involved in salt tolerance and maintaining the membrane potential across the plasma membrane in high salinity (Na+) or alkaline (K+) environments (PubMed:22329368, PubMed:7664728, PubMed:8437581).</text>
</comment>
<comment type="catalytic activity">
    <reaction evidence="12">
        <text>Na(+)(in) + ATP + H2O = Na(+)(out) + ADP + phosphate + H(+)</text>
        <dbReference type="Rhea" id="RHEA:14633"/>
        <dbReference type="ChEBI" id="CHEBI:15377"/>
        <dbReference type="ChEBI" id="CHEBI:15378"/>
        <dbReference type="ChEBI" id="CHEBI:29101"/>
        <dbReference type="ChEBI" id="CHEBI:30616"/>
        <dbReference type="ChEBI" id="CHEBI:43474"/>
        <dbReference type="ChEBI" id="CHEBI:456216"/>
        <dbReference type="EC" id="7.2.2.3"/>
    </reaction>
    <physiologicalReaction direction="left-to-right" evidence="12">
        <dbReference type="Rhea" id="RHEA:14634"/>
    </physiologicalReaction>
</comment>
<comment type="catalytic activity">
    <reaction evidence="11">
        <text>K(+)(in) + ATP + H2O = K(+)(out) + ADP + phosphate + H(+)</text>
        <dbReference type="Rhea" id="RHEA:75815"/>
        <dbReference type="ChEBI" id="CHEBI:15377"/>
        <dbReference type="ChEBI" id="CHEBI:15378"/>
        <dbReference type="ChEBI" id="CHEBI:29103"/>
        <dbReference type="ChEBI" id="CHEBI:30616"/>
        <dbReference type="ChEBI" id="CHEBI:43474"/>
        <dbReference type="ChEBI" id="CHEBI:456216"/>
    </reaction>
</comment>
<comment type="cofactor">
    <cofactor evidence="1">
        <name>Mg(2+)</name>
        <dbReference type="ChEBI" id="CHEBI:18420"/>
    </cofactor>
</comment>
<comment type="subcellular location">
    <subcellularLocation>
        <location evidence="5 8">Cell membrane</location>
        <topology evidence="5 8">Multi-pass membrane protein</topology>
    </subcellularLocation>
</comment>
<comment type="PTM">
    <text evidence="2">The active site is phosphorylated in presence of sodium or potassium and in conditions of higher pH. Not phosphorylated in presence of calcium ions.</text>
</comment>
<comment type="miscellaneous">
    <text evidence="6">Present with 639 molecules/cell in log phase SD medium.</text>
</comment>
<comment type="similarity">
    <text evidence="10">Belongs to the cation transport ATPase (P-type) (TC 3.A.3) family. Type IID subfamily.</text>
</comment>
<protein>
    <recommendedName>
        <fullName evidence="10">Sodium/potassium exporting P-type ATPase 2</fullName>
        <ecNumber evidence="12">7.2.2.3</ecNumber>
    </recommendedName>
</protein>
<organism>
    <name type="scientific">Saccharomyces cerevisiae (strain ATCC 204508 / S288c)</name>
    <name type="common">Baker's yeast</name>
    <dbReference type="NCBI Taxonomy" id="559292"/>
    <lineage>
        <taxon>Eukaryota</taxon>
        <taxon>Fungi</taxon>
        <taxon>Dikarya</taxon>
        <taxon>Ascomycota</taxon>
        <taxon>Saccharomycotina</taxon>
        <taxon>Saccharomycetes</taxon>
        <taxon>Saccharomycetales</taxon>
        <taxon>Saccharomycetaceae</taxon>
        <taxon>Saccharomyces</taxon>
    </lineage>
</organism>
<name>ATN2_YEAST</name>
<proteinExistence type="evidence at protein level"/>
<feature type="chain" id="PRO_0000046243" description="Sodium/potassium exporting P-type ATPase 2">
    <location>
        <begin position="1"/>
        <end position="1091"/>
    </location>
</feature>
<feature type="topological domain" description="Cytoplasmic" evidence="3">
    <location>
        <begin position="1"/>
        <end position="63"/>
    </location>
</feature>
<feature type="transmembrane region" description="Helical" evidence="3">
    <location>
        <begin position="64"/>
        <end position="84"/>
    </location>
</feature>
<feature type="topological domain" description="Extracellular" evidence="3">
    <location>
        <begin position="85"/>
        <end position="90"/>
    </location>
</feature>
<feature type="transmembrane region" description="Helical" evidence="3">
    <location>
        <begin position="91"/>
        <end position="111"/>
    </location>
</feature>
<feature type="topological domain" description="Cytoplasmic" evidence="3">
    <location>
        <begin position="112"/>
        <end position="282"/>
    </location>
</feature>
<feature type="transmembrane region" description="Helical" evidence="3">
    <location>
        <begin position="283"/>
        <end position="303"/>
    </location>
</feature>
<feature type="topological domain" description="Extracellular" evidence="3">
    <location>
        <begin position="304"/>
        <end position="312"/>
    </location>
</feature>
<feature type="transmembrane region" description="Helical" evidence="3">
    <location>
        <begin position="313"/>
        <end position="333"/>
    </location>
</feature>
<feature type="topological domain" description="Cytoplasmic" evidence="3">
    <location>
        <begin position="334"/>
        <end position="815"/>
    </location>
</feature>
<feature type="transmembrane region" description="Helical" evidence="3">
    <location>
        <begin position="816"/>
        <end position="836"/>
    </location>
</feature>
<feature type="topological domain" description="Extracellular" evidence="3">
    <location>
        <begin position="837"/>
        <end position="848"/>
    </location>
</feature>
<feature type="transmembrane region" description="Helical" evidence="3">
    <location>
        <begin position="849"/>
        <end position="869"/>
    </location>
</feature>
<feature type="topological domain" description="Cytoplasmic" evidence="3">
    <location>
        <begin position="870"/>
        <end position="885"/>
    </location>
</feature>
<feature type="transmembrane region" description="Helical" evidence="3">
    <location>
        <begin position="886"/>
        <end position="906"/>
    </location>
</feature>
<feature type="topological domain" description="Extracellular" evidence="3">
    <location>
        <begin position="907"/>
        <end position="943"/>
    </location>
</feature>
<feature type="transmembrane region" description="Helical" evidence="3">
    <location>
        <begin position="944"/>
        <end position="964"/>
    </location>
</feature>
<feature type="topological domain" description="Cytoplasmic" evidence="3">
    <location>
        <begin position="965"/>
        <end position="991"/>
    </location>
</feature>
<feature type="transmembrane region" description="Helical" evidence="3">
    <location>
        <begin position="992"/>
        <end position="1012"/>
    </location>
</feature>
<feature type="topological domain" description="Extracellular" evidence="3">
    <location>
        <begin position="1013"/>
        <end position="1021"/>
    </location>
</feature>
<feature type="transmembrane region" description="Helical" evidence="3">
    <location>
        <begin position="1022"/>
        <end position="1042"/>
    </location>
</feature>
<feature type="topological domain" description="Cytoplasmic" evidence="3">
    <location>
        <begin position="1043"/>
        <end position="1091"/>
    </location>
</feature>
<feature type="region of interest" description="Disordered" evidence="4">
    <location>
        <begin position="499"/>
        <end position="525"/>
    </location>
</feature>
<feature type="compositionally biased region" description="Polar residues" evidence="4">
    <location>
        <begin position="503"/>
        <end position="519"/>
    </location>
</feature>
<feature type="active site" description="4-aspartylphosphate intermediate" evidence="1">
    <location>
        <position position="369"/>
    </location>
</feature>
<feature type="binding site" evidence="1">
    <location>
        <position position="369"/>
    </location>
    <ligand>
        <name>Mg(2+)</name>
        <dbReference type="ChEBI" id="CHEBI:18420"/>
    </ligand>
</feature>
<feature type="binding site" evidence="1">
    <location>
        <position position="371"/>
    </location>
    <ligand>
        <name>ATP</name>
        <dbReference type="ChEBI" id="CHEBI:30616"/>
    </ligand>
</feature>
<feature type="binding site" evidence="1">
    <location>
        <position position="371"/>
    </location>
    <ligand>
        <name>Mg(2+)</name>
        <dbReference type="ChEBI" id="CHEBI:18420"/>
    </ligand>
</feature>
<feature type="binding site" evidence="1">
    <location>
        <position position="483"/>
    </location>
    <ligand>
        <name>ATP</name>
        <dbReference type="ChEBI" id="CHEBI:30616"/>
    </ligand>
</feature>
<feature type="binding site" evidence="1">
    <location>
        <position position="561"/>
    </location>
    <ligand>
        <name>ATP</name>
        <dbReference type="ChEBI" id="CHEBI:30616"/>
    </ligand>
</feature>
<feature type="binding site" evidence="1">
    <location>
        <position position="606"/>
    </location>
    <ligand>
        <name>ATP</name>
        <dbReference type="ChEBI" id="CHEBI:30616"/>
    </ligand>
</feature>
<feature type="binding site" evidence="1">
    <location>
        <position position="673"/>
    </location>
    <ligand>
        <name>ATP</name>
        <dbReference type="ChEBI" id="CHEBI:30616"/>
    </ligand>
</feature>
<feature type="binding site" evidence="1">
    <location>
        <position position="674"/>
    </location>
    <ligand>
        <name>ATP</name>
        <dbReference type="ChEBI" id="CHEBI:30616"/>
    </ligand>
</feature>
<feature type="binding site" evidence="1">
    <location>
        <position position="675"/>
    </location>
    <ligand>
        <name>ATP</name>
        <dbReference type="ChEBI" id="CHEBI:30616"/>
    </ligand>
</feature>
<feature type="binding site" evidence="1">
    <location>
        <position position="732"/>
    </location>
    <ligand>
        <name>ATP</name>
        <dbReference type="ChEBI" id="CHEBI:30616"/>
    </ligand>
</feature>
<feature type="binding site" evidence="1">
    <location>
        <position position="738"/>
    </location>
    <ligand>
        <name>ATP</name>
        <dbReference type="ChEBI" id="CHEBI:30616"/>
    </ligand>
</feature>
<feature type="binding site" evidence="1">
    <location>
        <position position="757"/>
    </location>
    <ligand>
        <name>Mg(2+)</name>
        <dbReference type="ChEBI" id="CHEBI:18420"/>
    </ligand>
</feature>
<feature type="binding site" evidence="1">
    <location>
        <position position="760"/>
    </location>
    <ligand>
        <name>ATP</name>
        <dbReference type="ChEBI" id="CHEBI:30616"/>
    </ligand>
</feature>
<keyword id="KW-0067">ATP-binding</keyword>
<keyword id="KW-1003">Cell membrane</keyword>
<keyword id="KW-0406">Ion transport</keyword>
<keyword id="KW-0460">Magnesium</keyword>
<keyword id="KW-0472">Membrane</keyword>
<keyword id="KW-0479">Metal-binding</keyword>
<keyword id="KW-0547">Nucleotide-binding</keyword>
<keyword id="KW-0630">Potassium</keyword>
<keyword id="KW-0633">Potassium transport</keyword>
<keyword id="KW-1185">Reference proteome</keyword>
<keyword id="KW-0915">Sodium</keyword>
<keyword id="KW-0739">Sodium transport</keyword>
<keyword id="KW-1278">Translocase</keyword>
<keyword id="KW-0812">Transmembrane</keyword>
<keyword id="KW-1133">Transmembrane helix</keyword>
<keyword id="KW-0813">Transport</keyword>
<gene>
    <name evidence="13" type="primary">ENA2</name>
    <name type="synonym">PMR2B</name>
    <name evidence="13" type="ordered locus">YDR039C</name>
</gene>